<protein>
    <recommendedName>
        <fullName evidence="12">Sensor histidine kinase CusS</fullName>
        <ecNumber evidence="13">2.7.13.3</ecNumber>
    </recommendedName>
</protein>
<feature type="chain" id="PRO_0000074724" description="Sensor histidine kinase CusS">
    <location>
        <begin position="1"/>
        <end position="480"/>
    </location>
</feature>
<feature type="topological domain" description="Cytoplasmic" evidence="12">
    <location>
        <begin position="1"/>
        <end position="15"/>
    </location>
</feature>
<feature type="transmembrane region" description="Helical" evidence="1">
    <location>
        <begin position="16"/>
        <end position="36"/>
    </location>
</feature>
<feature type="topological domain" description="Periplasmic" evidence="12">
    <location>
        <begin position="37"/>
        <end position="186"/>
    </location>
</feature>
<feature type="transmembrane region" description="Helical" evidence="1">
    <location>
        <begin position="187"/>
        <end position="207"/>
    </location>
</feature>
<feature type="topological domain" description="Cytoplasmic" evidence="8">
    <location>
        <begin position="208"/>
        <end position="480"/>
    </location>
</feature>
<feature type="domain" description="HAMP" evidence="2">
    <location>
        <begin position="208"/>
        <end position="260"/>
    </location>
</feature>
<feature type="domain" description="Histidine kinase" evidence="3">
    <location>
        <begin position="268"/>
        <end position="480"/>
    </location>
</feature>
<feature type="modified residue" description="Phosphohistidine; by autocatalysis" evidence="3">
    <location>
        <position position="271"/>
    </location>
</feature>
<feature type="helix" evidence="14">
    <location>
        <begin position="39"/>
        <end position="62"/>
    </location>
</feature>
<feature type="helix" evidence="14">
    <location>
        <begin position="69"/>
        <end position="81"/>
    </location>
</feature>
<feature type="strand" evidence="14">
    <location>
        <begin position="84"/>
        <end position="91"/>
    </location>
</feature>
<feature type="strand" evidence="14">
    <location>
        <begin position="97"/>
        <end position="100"/>
    </location>
</feature>
<feature type="helix" evidence="14">
    <location>
        <begin position="107"/>
        <end position="113"/>
    </location>
</feature>
<feature type="strand" evidence="14">
    <location>
        <begin position="126"/>
        <end position="128"/>
    </location>
</feature>
<feature type="helix" evidence="14">
    <location>
        <begin position="139"/>
        <end position="141"/>
    </location>
</feature>
<feature type="strand" evidence="14">
    <location>
        <begin position="148"/>
        <end position="159"/>
    </location>
</feature>
<feature type="strand" evidence="14">
    <location>
        <begin position="162"/>
        <end position="172"/>
    </location>
</feature>
<feature type="helix" evidence="14">
    <location>
        <begin position="174"/>
        <end position="183"/>
    </location>
</feature>
<gene>
    <name type="primary">cusS</name>
    <name type="synonym">ybcZ</name>
    <name type="ordered locus">b0570</name>
    <name type="ordered locus">JW5082</name>
</gene>
<proteinExistence type="evidence at protein level"/>
<evidence type="ECO:0000255" key="1"/>
<evidence type="ECO:0000255" key="2">
    <source>
        <dbReference type="PROSITE-ProRule" id="PRU00102"/>
    </source>
</evidence>
<evidence type="ECO:0000255" key="3">
    <source>
        <dbReference type="PROSITE-ProRule" id="PRU00107"/>
    </source>
</evidence>
<evidence type="ECO:0000269" key="4">
    <source>
    </source>
</evidence>
<evidence type="ECO:0000269" key="5">
    <source>
    </source>
</evidence>
<evidence type="ECO:0000269" key="6">
    <source>
    </source>
</evidence>
<evidence type="ECO:0000269" key="7">
    <source>
    </source>
</evidence>
<evidence type="ECO:0000269" key="8">
    <source>
    </source>
</evidence>
<evidence type="ECO:0000269" key="9">
    <source>
    </source>
</evidence>
<evidence type="ECO:0000269" key="10">
    <source>
    </source>
</evidence>
<evidence type="ECO:0000269" key="11">
    <source>
    </source>
</evidence>
<evidence type="ECO:0000305" key="12"/>
<evidence type="ECO:0000305" key="13">
    <source>
    </source>
</evidence>
<evidence type="ECO:0007829" key="14">
    <source>
        <dbReference type="PDB" id="5KU5"/>
    </source>
</evidence>
<accession>P77485</accession>
<accession>Q9R7T9</accession>
<accession>Q9R7U0</accession>
<name>CUSS_ECOLI</name>
<keyword id="KW-0002">3D-structure</keyword>
<keyword id="KW-0067">ATP-binding</keyword>
<keyword id="KW-0997">Cell inner membrane</keyword>
<keyword id="KW-1003">Cell membrane</keyword>
<keyword id="KW-0186">Copper</keyword>
<keyword id="KW-0418">Kinase</keyword>
<keyword id="KW-0472">Membrane</keyword>
<keyword id="KW-0547">Nucleotide-binding</keyword>
<keyword id="KW-0597">Phosphoprotein</keyword>
<keyword id="KW-1185">Reference proteome</keyword>
<keyword id="KW-0808">Transferase</keyword>
<keyword id="KW-0812">Transmembrane</keyword>
<keyword id="KW-1133">Transmembrane helix</keyword>
<keyword id="KW-0902">Two-component regulatory system</keyword>
<sequence>MVSKPFQRPFSLATRLTFFISLATIAAFFAFAWIMIHSVKVHFAEQDINDLKEISATLERVLNHPDETQARRLMTLEDIVSGYSNVLISLADSQGKTVYHSPGAPDIREFTRDAIPDKDAQGGEVYLLSGPTMMMPGHGHGHMEHSNWRMINLPVGPLVDGKPIYTLYIALSIDFHLHYINDLMNKLIMTASVISILIVFIVLLAVHKGHAPIRSVSRQIQNITSKDLDVRLDPQTVPIELEQLVLSFNHMIERIEDVFTRQSNFSADIAHEIRTPITNLITQTEIALSQSRSQKELEDVLYSNLEELTRMAKMVSDMLFLAQADNNQLIPEKKMLNLADEVGKVFDFFEALAEDRGVELRFVGDKCQVAGDPLMLRRALSNLLSNALRYTPTGETIVVRCQTVDHLVQVIVENPGTPIAPEHLPRLFDRFYRVDPSRQRKGEGSGIGLAIVKSIVVAHKGTVAVTSDARGTRFVITLPA</sequence>
<reference key="1">
    <citation type="journal article" date="2000" name="J. Bacteriol.">
        <title>Identification of a copper-responsive two-component system on the chromosome of Escherichia coli K-12.</title>
        <authorList>
            <person name="Munson G.P."/>
            <person name="Lam D.L."/>
            <person name="Outten F.W."/>
            <person name="O'Halloran T.V."/>
        </authorList>
    </citation>
    <scope>NUCLEOTIDE SEQUENCE [GENOMIC DNA]</scope>
    <scope>FUNCTION</scope>
    <source>
        <strain>K12 / DH5-alpha</strain>
    </source>
</reference>
<reference key="2">
    <citation type="journal article" date="1996" name="DNA Res.">
        <title>A 718-kb DNA sequence of the Escherichia coli K-12 genome corresponding to the 12.7-28.0 min region on the linkage map.</title>
        <authorList>
            <person name="Oshima T."/>
            <person name="Aiba H."/>
            <person name="Baba T."/>
            <person name="Fujita K."/>
            <person name="Hayashi K."/>
            <person name="Honjo A."/>
            <person name="Ikemoto K."/>
            <person name="Inada T."/>
            <person name="Itoh T."/>
            <person name="Kajihara M."/>
            <person name="Kanai K."/>
            <person name="Kashimoto K."/>
            <person name="Kimura S."/>
            <person name="Kitagawa M."/>
            <person name="Makino K."/>
            <person name="Masuda S."/>
            <person name="Miki T."/>
            <person name="Mizobuchi K."/>
            <person name="Mori H."/>
            <person name="Motomura K."/>
            <person name="Nakamura Y."/>
            <person name="Nashimoto H."/>
            <person name="Nishio Y."/>
            <person name="Saito N."/>
            <person name="Sampei G."/>
            <person name="Seki Y."/>
            <person name="Tagami H."/>
            <person name="Takemoto K."/>
            <person name="Wada C."/>
            <person name="Yamamoto Y."/>
            <person name="Yano M."/>
            <person name="Horiuchi T."/>
        </authorList>
    </citation>
    <scope>NUCLEOTIDE SEQUENCE [LARGE SCALE GENOMIC DNA]</scope>
    <source>
        <strain>K12 / W3110 / ATCC 27325 / DSM 5911</strain>
    </source>
</reference>
<reference key="3">
    <citation type="submission" date="1997-01" db="EMBL/GenBank/DDBJ databases">
        <title>Sequence of minutes 4-25 of Escherichia coli.</title>
        <authorList>
            <person name="Chung E."/>
            <person name="Allen E."/>
            <person name="Araujo R."/>
            <person name="Aparicio A.M."/>
            <person name="Davis K."/>
            <person name="Duncan M."/>
            <person name="Federspiel N."/>
            <person name="Hyman R."/>
            <person name="Kalman S."/>
            <person name="Komp C."/>
            <person name="Kurdi O."/>
            <person name="Lew H."/>
            <person name="Lin D."/>
            <person name="Namath A."/>
            <person name="Oefner P."/>
            <person name="Roberts D."/>
            <person name="Schramm S."/>
            <person name="Davis R.W."/>
        </authorList>
    </citation>
    <scope>NUCLEOTIDE SEQUENCE [LARGE SCALE GENOMIC DNA]</scope>
    <source>
        <strain>K12 / MG1655 / ATCC 47076</strain>
    </source>
</reference>
<reference key="4">
    <citation type="journal article" date="1997" name="Science">
        <title>The complete genome sequence of Escherichia coli K-12.</title>
        <authorList>
            <person name="Blattner F.R."/>
            <person name="Plunkett G. III"/>
            <person name="Bloch C.A."/>
            <person name="Perna N.T."/>
            <person name="Burland V."/>
            <person name="Riley M."/>
            <person name="Collado-Vides J."/>
            <person name="Glasner J.D."/>
            <person name="Rode C.K."/>
            <person name="Mayhew G.F."/>
            <person name="Gregor J."/>
            <person name="Davis N.W."/>
            <person name="Kirkpatrick H.A."/>
            <person name="Goeden M.A."/>
            <person name="Rose D.J."/>
            <person name="Mau B."/>
            <person name="Shao Y."/>
        </authorList>
    </citation>
    <scope>NUCLEOTIDE SEQUENCE [LARGE SCALE GENOMIC DNA]</scope>
    <source>
        <strain>K12 / MG1655 / ATCC 47076</strain>
    </source>
</reference>
<reference key="5">
    <citation type="journal article" date="2006" name="Mol. Syst. Biol.">
        <title>Highly accurate genome sequences of Escherichia coli K-12 strains MG1655 and W3110.</title>
        <authorList>
            <person name="Hayashi K."/>
            <person name="Morooka N."/>
            <person name="Yamamoto Y."/>
            <person name="Fujita K."/>
            <person name="Isono K."/>
            <person name="Choi S."/>
            <person name="Ohtsubo E."/>
            <person name="Baba T."/>
            <person name="Wanner B.L."/>
            <person name="Mori H."/>
            <person name="Horiuchi T."/>
        </authorList>
    </citation>
    <scope>NUCLEOTIDE SEQUENCE [LARGE SCALE GENOMIC DNA]</scope>
    <source>
        <strain>K12 / W3110 / ATCC 27325 / DSM 5911</strain>
    </source>
</reference>
<reference key="6">
    <citation type="journal article" date="2001" name="J. Biol. Chem.">
        <title>The independent cue and cus systems confer copper tolerance during aerobic and anaerobic growth in Escherichia coli.</title>
        <authorList>
            <person name="Outten F.W."/>
            <person name="Huffman D.L."/>
            <person name="Hale J.A."/>
            <person name="O'Halloran T.V."/>
        </authorList>
    </citation>
    <scope>FUNCTION IN COPPER HOMEOSTASIS</scope>
    <source>
        <strain>K12</strain>
    </source>
</reference>
<reference key="7">
    <citation type="journal article" date="2001" name="Microbiology">
        <title>The product of the ybdE gene of the Escherichia coli chromosome is involved in detoxification of silver ions.</title>
        <authorList>
            <person name="Franke S."/>
            <person name="Grass G."/>
            <person name="Nies D.H."/>
        </authorList>
    </citation>
    <scope>PROBABLE FUNCTION IN SILVER HOMEOSTASIS</scope>
    <source>
        <strain>K38</strain>
    </source>
</reference>
<reference key="8">
    <citation type="journal article" date="2005" name="J. Biol. Chem.">
        <title>Functional characterization in vitro of all two-component signal transduction systems from Escherichia coli.</title>
        <authorList>
            <person name="Yamamoto K."/>
            <person name="Hirao K."/>
            <person name="Oshima T."/>
            <person name="Aiba H."/>
            <person name="Utsumi R."/>
            <person name="Ishihama A."/>
        </authorList>
    </citation>
    <scope>FUNCTION</scope>
    <scope>AUTOPHOSPHORYLATION</scope>
    <source>
        <strain>K12 / W3110 / ATCC 27325 / DSM 5911</strain>
    </source>
</reference>
<reference key="9">
    <citation type="journal article" date="2005" name="Science">
        <title>Global topology analysis of the Escherichia coli inner membrane proteome.</title>
        <authorList>
            <person name="Daley D.O."/>
            <person name="Rapp M."/>
            <person name="Granseth E."/>
            <person name="Melen K."/>
            <person name="Drew D."/>
            <person name="von Heijne G."/>
        </authorList>
    </citation>
    <scope>TOPOLOGY [LARGE SCALE ANALYSIS]</scope>
    <scope>SUBCELLULAR LOCATION</scope>
    <source>
        <strain>K12 / MG1655 / ATCC 47076</strain>
    </source>
</reference>
<reference key="10">
    <citation type="journal article" date="2012" name="FEMS Microbiol. Lett.">
        <title>Regulation of Cu(I)/Ag(I) efflux genes in Escherichia coli by the sensor kinase CusS.</title>
        <authorList>
            <person name="Gudipaty S.A."/>
            <person name="Larsen A.S."/>
            <person name="Rensing C."/>
            <person name="McEvoy M.M."/>
        </authorList>
    </citation>
    <scope>FUNCTION</scope>
    <scope>DISRUPTION PHENOTYPE</scope>
</reference>
<reference key="11">
    <citation type="journal article" date="2015" name="Microbiology">
        <title>Cooperative regulation of the common target genes between H(2)O(2)-sensing YedVW and Cu2+-sensing CusSR in Escherichia coli.</title>
        <authorList>
            <person name="Urano H."/>
            <person name="Umezawa Y."/>
            <person name="Yamamoto K."/>
            <person name="Ishihama A."/>
            <person name="Ogasawara H."/>
        </authorList>
    </citation>
    <scope>INTERPLAY BETWEEN HPRSR AND CUSSR</scope>
</reference>
<reference key="12">
    <citation type="journal article" date="2017" name="Microbiology">
        <title>Cross-regulation between two common ancestral response regulators, HprR and CusR, in Escherichia coli.</title>
        <authorList>
            <person name="Urano H."/>
            <person name="Yoshida M."/>
            <person name="Ogawa A."/>
            <person name="Yamamoto K."/>
            <person name="Ishihama A."/>
            <person name="Ogasawara H."/>
        </authorList>
    </citation>
    <scope>INTERPLAY BETWEEN HPRSR AND CUSSR</scope>
</reference>
<organism>
    <name type="scientific">Escherichia coli (strain K12)</name>
    <dbReference type="NCBI Taxonomy" id="83333"/>
    <lineage>
        <taxon>Bacteria</taxon>
        <taxon>Pseudomonadati</taxon>
        <taxon>Pseudomonadota</taxon>
        <taxon>Gammaproteobacteria</taxon>
        <taxon>Enterobacterales</taxon>
        <taxon>Enterobacteriaceae</taxon>
        <taxon>Escherichia</taxon>
    </lineage>
</organism>
<comment type="function">
    <text evidence="4 5 6 7 9">Member of the two-component regulatory system CusS/CusR involved in response to copper and silver. Acts as a copper/silver ion sensor. Activates CusR by phosphorylation.</text>
</comment>
<comment type="catalytic activity">
    <reaction evidence="13">
        <text>ATP + protein L-histidine = ADP + protein N-phospho-L-histidine.</text>
        <dbReference type="EC" id="2.7.13.3"/>
    </reaction>
</comment>
<comment type="subcellular location">
    <subcellularLocation>
        <location evidence="8">Cell inner membrane</location>
        <topology evidence="1">Multi-pass membrane protein</topology>
    </subcellularLocation>
</comment>
<comment type="PTM">
    <text evidence="7">Autophosphorylated.</text>
</comment>
<comment type="disruption phenotype">
    <text evidence="9">Deletion mutant has higher susceptibility to silver and shows an increase in copper accumulation.</text>
</comment>
<comment type="miscellaneous">
    <text evidence="6">The cus system plays an important role in copper tolerance under anaerobic growth and, under extreme copper stress, in aerobic growth.</text>
</comment>
<comment type="miscellaneous">
    <text evidence="10 11">HprSR and CusSR form a unique regulation system, where both two-component systems recognize and regulate the same set of genes, but under different environmental conditions. HprSR plays a role in H(2)O(2) response regulation, while CusSR plays a role in Cu(2+) response regulation.</text>
</comment>
<dbReference type="EC" id="2.7.13.3" evidence="13"/>
<dbReference type="EMBL" id="AF245661">
    <property type="protein sequence ID" value="AAF70176.1"/>
    <property type="molecule type" value="Genomic_DNA"/>
</dbReference>
<dbReference type="EMBL" id="U82598">
    <property type="protein sequence ID" value="AAB40768.1"/>
    <property type="molecule type" value="Genomic_DNA"/>
</dbReference>
<dbReference type="EMBL" id="U00096">
    <property type="protein sequence ID" value="AAC73671.1"/>
    <property type="molecule type" value="Genomic_DNA"/>
</dbReference>
<dbReference type="EMBL" id="AP009048">
    <property type="protein sequence ID" value="BAA35204.2"/>
    <property type="molecule type" value="Genomic_DNA"/>
</dbReference>
<dbReference type="PIR" id="H64789">
    <property type="entry name" value="H64789"/>
</dbReference>
<dbReference type="RefSeq" id="NP_415102.1">
    <property type="nucleotide sequence ID" value="NC_000913.3"/>
</dbReference>
<dbReference type="RefSeq" id="WP_000253839.1">
    <property type="nucleotide sequence ID" value="NZ_SSZK01000024.1"/>
</dbReference>
<dbReference type="PDB" id="5KU5">
    <property type="method" value="X-ray"/>
    <property type="resolution" value="2.15 A"/>
    <property type="chains" value="A/B/C/D=39-187"/>
</dbReference>
<dbReference type="PDBsum" id="5KU5"/>
<dbReference type="SMR" id="P77485"/>
<dbReference type="BioGRID" id="4259499">
    <property type="interactions" value="32"/>
</dbReference>
<dbReference type="BioGRID" id="850340">
    <property type="interactions" value="2"/>
</dbReference>
<dbReference type="DIP" id="DIP-9349N"/>
<dbReference type="FunCoup" id="P77485">
    <property type="interactions" value="266"/>
</dbReference>
<dbReference type="IntAct" id="P77485">
    <property type="interactions" value="2"/>
</dbReference>
<dbReference type="STRING" id="511145.b0570"/>
<dbReference type="PaxDb" id="511145-b0570"/>
<dbReference type="EnsemblBacteria" id="AAC73671">
    <property type="protein sequence ID" value="AAC73671"/>
    <property type="gene ID" value="b0570"/>
</dbReference>
<dbReference type="GeneID" id="945978"/>
<dbReference type="KEGG" id="ecj:JW5082"/>
<dbReference type="KEGG" id="eco:b0570"/>
<dbReference type="KEGG" id="ecoc:C3026_02830"/>
<dbReference type="PATRIC" id="fig|1411691.4.peg.1704"/>
<dbReference type="EchoBASE" id="EB3406"/>
<dbReference type="eggNOG" id="COG5002">
    <property type="taxonomic scope" value="Bacteria"/>
</dbReference>
<dbReference type="HOGENOM" id="CLU_000445_89_6_6"/>
<dbReference type="InParanoid" id="P77485"/>
<dbReference type="OMA" id="YANVFIC"/>
<dbReference type="OrthoDB" id="9809766at2"/>
<dbReference type="PhylomeDB" id="P77485"/>
<dbReference type="BioCyc" id="EcoCyc:G6318-MONOMER"/>
<dbReference type="BioCyc" id="MetaCyc:G6318-MONOMER"/>
<dbReference type="BRENDA" id="2.7.13.3">
    <property type="organism ID" value="2026"/>
</dbReference>
<dbReference type="PRO" id="PR:P77485"/>
<dbReference type="Proteomes" id="UP000000625">
    <property type="component" value="Chromosome"/>
</dbReference>
<dbReference type="GO" id="GO:0016020">
    <property type="term" value="C:membrane"/>
    <property type="evidence" value="ECO:0000304"/>
    <property type="project" value="EcoliWiki"/>
</dbReference>
<dbReference type="GO" id="GO:0005886">
    <property type="term" value="C:plasma membrane"/>
    <property type="evidence" value="ECO:0000314"/>
    <property type="project" value="EcoCyc"/>
</dbReference>
<dbReference type="GO" id="GO:0005524">
    <property type="term" value="F:ATP binding"/>
    <property type="evidence" value="ECO:0007669"/>
    <property type="project" value="UniProtKB-KW"/>
</dbReference>
<dbReference type="GO" id="GO:0046872">
    <property type="term" value="F:metal ion binding"/>
    <property type="evidence" value="ECO:0000353"/>
    <property type="project" value="EcoCyc"/>
</dbReference>
<dbReference type="GO" id="GO:0000155">
    <property type="term" value="F:phosphorelay sensor kinase activity"/>
    <property type="evidence" value="ECO:0000314"/>
    <property type="project" value="EcoliWiki"/>
</dbReference>
<dbReference type="GO" id="GO:0004673">
    <property type="term" value="F:protein histidine kinase activity"/>
    <property type="evidence" value="ECO:0000314"/>
    <property type="project" value="EcoCyc"/>
</dbReference>
<dbReference type="GO" id="GO:0071280">
    <property type="term" value="P:cellular response to copper ion"/>
    <property type="evidence" value="ECO:0000315"/>
    <property type="project" value="EcoCyc"/>
</dbReference>
<dbReference type="GO" id="GO:0071292">
    <property type="term" value="P:cellular response to silver ion"/>
    <property type="evidence" value="ECO:0000314"/>
    <property type="project" value="EcoCyc"/>
</dbReference>
<dbReference type="GO" id="GO:0000160">
    <property type="term" value="P:phosphorelay signal transduction system"/>
    <property type="evidence" value="ECO:0000318"/>
    <property type="project" value="GO_Central"/>
</dbReference>
<dbReference type="GO" id="GO:0007165">
    <property type="term" value="P:signal transduction"/>
    <property type="evidence" value="ECO:0000314"/>
    <property type="project" value="EcoCyc"/>
</dbReference>
<dbReference type="CDD" id="cd06225">
    <property type="entry name" value="HAMP"/>
    <property type="match status" value="1"/>
</dbReference>
<dbReference type="CDD" id="cd00082">
    <property type="entry name" value="HisKA"/>
    <property type="match status" value="1"/>
</dbReference>
<dbReference type="FunFam" id="3.30.565.10:FF:000006">
    <property type="entry name" value="Sensor histidine kinase WalK"/>
    <property type="match status" value="1"/>
</dbReference>
<dbReference type="FunFam" id="1.10.287.130:FF:000001">
    <property type="entry name" value="Two-component sensor histidine kinase"/>
    <property type="match status" value="1"/>
</dbReference>
<dbReference type="Gene3D" id="1.10.287.130">
    <property type="match status" value="1"/>
</dbReference>
<dbReference type="Gene3D" id="6.10.340.10">
    <property type="match status" value="1"/>
</dbReference>
<dbReference type="Gene3D" id="3.30.565.10">
    <property type="entry name" value="Histidine kinase-like ATPase, C-terminal domain"/>
    <property type="match status" value="1"/>
</dbReference>
<dbReference type="InterPro" id="IPR048590">
    <property type="entry name" value="CusS-like_sensor"/>
</dbReference>
<dbReference type="InterPro" id="IPR006290">
    <property type="entry name" value="CztS_silS_copS"/>
</dbReference>
<dbReference type="InterPro" id="IPR003660">
    <property type="entry name" value="HAMP_dom"/>
</dbReference>
<dbReference type="InterPro" id="IPR036890">
    <property type="entry name" value="HATPase_C_sf"/>
</dbReference>
<dbReference type="InterPro" id="IPR005467">
    <property type="entry name" value="His_kinase_dom"/>
</dbReference>
<dbReference type="InterPro" id="IPR003661">
    <property type="entry name" value="HisK_dim/P_dom"/>
</dbReference>
<dbReference type="InterPro" id="IPR036097">
    <property type="entry name" value="HisK_dim/P_sf"/>
</dbReference>
<dbReference type="InterPro" id="IPR004358">
    <property type="entry name" value="Sig_transdc_His_kin-like_C"/>
</dbReference>
<dbReference type="InterPro" id="IPR050428">
    <property type="entry name" value="TCS_sensor_his_kinase"/>
</dbReference>
<dbReference type="NCBIfam" id="TIGR01386">
    <property type="entry name" value="cztS_silS_copS"/>
    <property type="match status" value="1"/>
</dbReference>
<dbReference type="NCBIfam" id="NF007345">
    <property type="entry name" value="PRK09835.1"/>
    <property type="match status" value="1"/>
</dbReference>
<dbReference type="PANTHER" id="PTHR45436:SF15">
    <property type="entry name" value="SENSOR HISTIDINE KINASE CUSS"/>
    <property type="match status" value="1"/>
</dbReference>
<dbReference type="PANTHER" id="PTHR45436">
    <property type="entry name" value="SENSOR HISTIDINE KINASE YKOH"/>
    <property type="match status" value="1"/>
</dbReference>
<dbReference type="Pfam" id="PF21085">
    <property type="entry name" value="CusS"/>
    <property type="match status" value="1"/>
</dbReference>
<dbReference type="Pfam" id="PF00672">
    <property type="entry name" value="HAMP"/>
    <property type="match status" value="1"/>
</dbReference>
<dbReference type="Pfam" id="PF02518">
    <property type="entry name" value="HATPase_c"/>
    <property type="match status" value="1"/>
</dbReference>
<dbReference type="Pfam" id="PF00512">
    <property type="entry name" value="HisKA"/>
    <property type="match status" value="1"/>
</dbReference>
<dbReference type="PRINTS" id="PR00344">
    <property type="entry name" value="BCTRLSENSOR"/>
</dbReference>
<dbReference type="SMART" id="SM00304">
    <property type="entry name" value="HAMP"/>
    <property type="match status" value="1"/>
</dbReference>
<dbReference type="SMART" id="SM00387">
    <property type="entry name" value="HATPase_c"/>
    <property type="match status" value="1"/>
</dbReference>
<dbReference type="SMART" id="SM00388">
    <property type="entry name" value="HisKA"/>
    <property type="match status" value="1"/>
</dbReference>
<dbReference type="SUPFAM" id="SSF55874">
    <property type="entry name" value="ATPase domain of HSP90 chaperone/DNA topoisomerase II/histidine kinase"/>
    <property type="match status" value="1"/>
</dbReference>
<dbReference type="SUPFAM" id="SSF47384">
    <property type="entry name" value="Homodimeric domain of signal transducing histidine kinase"/>
    <property type="match status" value="1"/>
</dbReference>
<dbReference type="PROSITE" id="PS50885">
    <property type="entry name" value="HAMP"/>
    <property type="match status" value="1"/>
</dbReference>
<dbReference type="PROSITE" id="PS50109">
    <property type="entry name" value="HIS_KIN"/>
    <property type="match status" value="1"/>
</dbReference>